<protein>
    <recommendedName>
        <fullName>Phosphocarrier protein NPr</fullName>
    </recommendedName>
    <alternativeName>
        <fullName>Nitrogen-related HPr</fullName>
    </alternativeName>
</protein>
<keyword id="KW-0963">Cytoplasm</keyword>
<keyword id="KW-0598">Phosphotransferase system</keyword>
<keyword id="KW-1185">Reference proteome</keyword>
<name>PTSO_ECO57</name>
<evidence type="ECO:0000250" key="1"/>
<evidence type="ECO:0000255" key="2">
    <source>
        <dbReference type="PROSITE-ProRule" id="PRU00681"/>
    </source>
</evidence>
<evidence type="ECO:0000305" key="3"/>
<sequence length="90" mass="9810">MTVKQTVEITNKLGMHARPAMKLFELMQGFDAEVLLRNDEGTEAEANSVIALLMLDSAKGRQIEVEATGPQEEEALAAVIALFNSGFDED</sequence>
<dbReference type="EMBL" id="AE005174">
    <property type="protein sequence ID" value="AAG58340.1"/>
    <property type="molecule type" value="Genomic_DNA"/>
</dbReference>
<dbReference type="EMBL" id="BA000007">
    <property type="protein sequence ID" value="BAB37508.1"/>
    <property type="molecule type" value="Genomic_DNA"/>
</dbReference>
<dbReference type="PIR" id="E91139">
    <property type="entry name" value="E91139"/>
</dbReference>
<dbReference type="PIR" id="H85984">
    <property type="entry name" value="H85984"/>
</dbReference>
<dbReference type="SMR" id="P0A9N2"/>
<dbReference type="STRING" id="155864.Z4569"/>
<dbReference type="KEGG" id="ece:Z4569"/>
<dbReference type="KEGG" id="ecs:ECs_4085"/>
<dbReference type="PATRIC" id="fig|386585.9.peg.4264"/>
<dbReference type="eggNOG" id="COG1925">
    <property type="taxonomic scope" value="Bacteria"/>
</dbReference>
<dbReference type="HOGENOM" id="CLU_136230_1_3_6"/>
<dbReference type="OMA" id="PAMMLFE"/>
<dbReference type="Proteomes" id="UP000000558">
    <property type="component" value="Chromosome"/>
</dbReference>
<dbReference type="Proteomes" id="UP000002519">
    <property type="component" value="Chromosome"/>
</dbReference>
<dbReference type="GO" id="GO:0005737">
    <property type="term" value="C:cytoplasm"/>
    <property type="evidence" value="ECO:0007669"/>
    <property type="project" value="UniProtKB-SubCell"/>
</dbReference>
<dbReference type="GO" id="GO:0009401">
    <property type="term" value="P:phosphoenolpyruvate-dependent sugar phosphotransferase system"/>
    <property type="evidence" value="ECO:0007669"/>
    <property type="project" value="UniProtKB-KW"/>
</dbReference>
<dbReference type="CDD" id="cd00367">
    <property type="entry name" value="PTS-HPr_like"/>
    <property type="match status" value="1"/>
</dbReference>
<dbReference type="FunFam" id="3.30.1340.10:FF:000002">
    <property type="entry name" value="PTS phosphocarrier protein NPr"/>
    <property type="match status" value="1"/>
</dbReference>
<dbReference type="Gene3D" id="3.30.1340.10">
    <property type="entry name" value="HPr-like"/>
    <property type="match status" value="1"/>
</dbReference>
<dbReference type="InterPro" id="IPR050399">
    <property type="entry name" value="HPr"/>
</dbReference>
<dbReference type="InterPro" id="IPR000032">
    <property type="entry name" value="HPr-like"/>
</dbReference>
<dbReference type="InterPro" id="IPR035895">
    <property type="entry name" value="HPr-like_sf"/>
</dbReference>
<dbReference type="InterPro" id="IPR001020">
    <property type="entry name" value="PTS_HPr_His_P_site"/>
</dbReference>
<dbReference type="InterPro" id="IPR002114">
    <property type="entry name" value="PTS_HPr_Ser_P_site"/>
</dbReference>
<dbReference type="NCBIfam" id="NF008146">
    <property type="entry name" value="PRK10897.1"/>
    <property type="match status" value="1"/>
</dbReference>
<dbReference type="NCBIfam" id="TIGR01003">
    <property type="entry name" value="PTS_HPr_family"/>
    <property type="match status" value="1"/>
</dbReference>
<dbReference type="PANTHER" id="PTHR33705">
    <property type="entry name" value="PHOSPHOCARRIER PROTEIN HPR"/>
    <property type="match status" value="1"/>
</dbReference>
<dbReference type="PANTHER" id="PTHR33705:SF2">
    <property type="entry name" value="PHOSPHOCARRIER PROTEIN NPR"/>
    <property type="match status" value="1"/>
</dbReference>
<dbReference type="Pfam" id="PF00381">
    <property type="entry name" value="PTS-HPr"/>
    <property type="match status" value="1"/>
</dbReference>
<dbReference type="PRINTS" id="PR00107">
    <property type="entry name" value="PHOSPHOCPHPR"/>
</dbReference>
<dbReference type="SUPFAM" id="SSF55594">
    <property type="entry name" value="HPr-like"/>
    <property type="match status" value="1"/>
</dbReference>
<dbReference type="PROSITE" id="PS51350">
    <property type="entry name" value="PTS_HPR_DOM"/>
    <property type="match status" value="1"/>
</dbReference>
<dbReference type="PROSITE" id="PS00369">
    <property type="entry name" value="PTS_HPR_HIS"/>
    <property type="match status" value="1"/>
</dbReference>
<dbReference type="PROSITE" id="PS00589">
    <property type="entry name" value="PTS_HPR_SER"/>
    <property type="match status" value="1"/>
</dbReference>
<organism>
    <name type="scientific">Escherichia coli O157:H7</name>
    <dbReference type="NCBI Taxonomy" id="83334"/>
    <lineage>
        <taxon>Bacteria</taxon>
        <taxon>Pseudomonadati</taxon>
        <taxon>Pseudomonadota</taxon>
        <taxon>Gammaproteobacteria</taxon>
        <taxon>Enterobacterales</taxon>
        <taxon>Enterobacteriaceae</taxon>
        <taxon>Escherichia</taxon>
    </lineage>
</organism>
<comment type="function">
    <text evidence="1">Component of the phosphoenolpyruvate-dependent nitrogen-metabolic phosphotransferase system (nitrogen-metabolic PTS), that seems to be involved in regulating nitrogen metabolism. The phosphoryl group from phosphoenolpyruvate (PEP) is transferred to the phosphoryl carrier protein NPr by enzyme I-Ntr. Phospho-NPr then transfers it to EIIA-Ntr. Could function in the transcriptional regulation of sigma-54 dependent operons in conjunction with the NPr (PtsO) and EIIA-Ntr (PtsN) proteins.</text>
</comment>
<comment type="subcellular location">
    <subcellularLocation>
        <location evidence="1">Cytoplasm</location>
    </subcellularLocation>
</comment>
<comment type="similarity">
    <text evidence="3">Belongs to the HPr family.</text>
</comment>
<feature type="chain" id="PRO_0000107891" description="Phosphocarrier protein NPr">
    <location>
        <begin position="1"/>
        <end position="90"/>
    </location>
</feature>
<feature type="domain" description="HPr" evidence="2">
    <location>
        <begin position="2"/>
        <end position="90"/>
    </location>
</feature>
<feature type="active site" description="Pros-phosphohistidine intermediate" evidence="2">
    <location>
        <position position="16"/>
    </location>
</feature>
<accession>P0A9N2</accession>
<accession>P33996</accession>
<proteinExistence type="inferred from homology"/>
<reference key="1">
    <citation type="journal article" date="2001" name="Nature">
        <title>Genome sequence of enterohaemorrhagic Escherichia coli O157:H7.</title>
        <authorList>
            <person name="Perna N.T."/>
            <person name="Plunkett G. III"/>
            <person name="Burland V."/>
            <person name="Mau B."/>
            <person name="Glasner J.D."/>
            <person name="Rose D.J."/>
            <person name="Mayhew G.F."/>
            <person name="Evans P.S."/>
            <person name="Gregor J."/>
            <person name="Kirkpatrick H.A."/>
            <person name="Posfai G."/>
            <person name="Hackett J."/>
            <person name="Klink S."/>
            <person name="Boutin A."/>
            <person name="Shao Y."/>
            <person name="Miller L."/>
            <person name="Grotbeck E.J."/>
            <person name="Davis N.W."/>
            <person name="Lim A."/>
            <person name="Dimalanta E.T."/>
            <person name="Potamousis K."/>
            <person name="Apodaca J."/>
            <person name="Anantharaman T.S."/>
            <person name="Lin J."/>
            <person name="Yen G."/>
            <person name="Schwartz D.C."/>
            <person name="Welch R.A."/>
            <person name="Blattner F.R."/>
        </authorList>
    </citation>
    <scope>NUCLEOTIDE SEQUENCE [LARGE SCALE GENOMIC DNA]</scope>
    <source>
        <strain>O157:H7 / EDL933 / ATCC 700927 / EHEC</strain>
    </source>
</reference>
<reference key="2">
    <citation type="journal article" date="2001" name="DNA Res.">
        <title>Complete genome sequence of enterohemorrhagic Escherichia coli O157:H7 and genomic comparison with a laboratory strain K-12.</title>
        <authorList>
            <person name="Hayashi T."/>
            <person name="Makino K."/>
            <person name="Ohnishi M."/>
            <person name="Kurokawa K."/>
            <person name="Ishii K."/>
            <person name="Yokoyama K."/>
            <person name="Han C.-G."/>
            <person name="Ohtsubo E."/>
            <person name="Nakayama K."/>
            <person name="Murata T."/>
            <person name="Tanaka M."/>
            <person name="Tobe T."/>
            <person name="Iida T."/>
            <person name="Takami H."/>
            <person name="Honda T."/>
            <person name="Sasakawa C."/>
            <person name="Ogasawara N."/>
            <person name="Yasunaga T."/>
            <person name="Kuhara S."/>
            <person name="Shiba T."/>
            <person name="Hattori M."/>
            <person name="Shinagawa H."/>
        </authorList>
    </citation>
    <scope>NUCLEOTIDE SEQUENCE [LARGE SCALE GENOMIC DNA]</scope>
    <source>
        <strain>O157:H7 / Sakai / RIMD 0509952 / EHEC</strain>
    </source>
</reference>
<gene>
    <name type="primary">ptsO</name>
    <name type="ordered locus">Z4569</name>
    <name type="ordered locus">ECs4085</name>
</gene>